<evidence type="ECO:0000255" key="1">
    <source>
        <dbReference type="HAMAP-Rule" id="MF_00040"/>
    </source>
</evidence>
<proteinExistence type="inferred from homology"/>
<name>RRF_CHLSY</name>
<accession>B9LEM3</accession>
<sequence>MLNDVISEYEAHLKKATEALRHHLASIRTGRASSALVEHLHVEAYGMTMPLNQLANISVPEPRLIVIQPYDANMIKAIEKAIQQSDLGLNPSNDGRVIRLPVPPLTEERRRELVKMVRHRVEEVKISVRNQRRDAIDDLKKLEAEKLISEDELHRGQERIQQLTDRCTRELDQIGAEKEAEVMAV</sequence>
<gene>
    <name evidence="1" type="primary">frr</name>
    <name type="ordered locus">Chy400_3849</name>
</gene>
<organism>
    <name type="scientific">Chloroflexus aurantiacus (strain ATCC 29364 / DSM 637 / Y-400-fl)</name>
    <dbReference type="NCBI Taxonomy" id="480224"/>
    <lineage>
        <taxon>Bacteria</taxon>
        <taxon>Bacillati</taxon>
        <taxon>Chloroflexota</taxon>
        <taxon>Chloroflexia</taxon>
        <taxon>Chloroflexales</taxon>
        <taxon>Chloroflexineae</taxon>
        <taxon>Chloroflexaceae</taxon>
        <taxon>Chloroflexus</taxon>
    </lineage>
</organism>
<feature type="chain" id="PRO_1000194912" description="Ribosome-recycling factor">
    <location>
        <begin position="1"/>
        <end position="185"/>
    </location>
</feature>
<protein>
    <recommendedName>
        <fullName evidence="1">Ribosome-recycling factor</fullName>
        <shortName evidence="1">RRF</shortName>
    </recommendedName>
    <alternativeName>
        <fullName evidence="1">Ribosome-releasing factor</fullName>
    </alternativeName>
</protein>
<reference key="1">
    <citation type="submission" date="2009-01" db="EMBL/GenBank/DDBJ databases">
        <title>Complete sequence of Chloroflexus sp. Y-400-fl.</title>
        <authorList>
            <consortium name="US DOE Joint Genome Institute"/>
            <person name="Lucas S."/>
            <person name="Copeland A."/>
            <person name="Lapidus A."/>
            <person name="Glavina del Rio T."/>
            <person name="Dalin E."/>
            <person name="Tice H."/>
            <person name="Bruce D."/>
            <person name="Goodwin L."/>
            <person name="Pitluck S."/>
            <person name="Sims D."/>
            <person name="Kiss H."/>
            <person name="Brettin T."/>
            <person name="Detter J.C."/>
            <person name="Han C."/>
            <person name="Larimer F."/>
            <person name="Land M."/>
            <person name="Hauser L."/>
            <person name="Kyrpides N."/>
            <person name="Ovchinnikova G."/>
            <person name="Bryant D.A."/>
            <person name="Richardson P."/>
        </authorList>
    </citation>
    <scope>NUCLEOTIDE SEQUENCE [LARGE SCALE GENOMIC DNA]</scope>
    <source>
        <strain>ATCC 29364 / DSM 637 / Y-400-fl</strain>
    </source>
</reference>
<keyword id="KW-0963">Cytoplasm</keyword>
<keyword id="KW-0648">Protein biosynthesis</keyword>
<comment type="function">
    <text evidence="1">Responsible for the release of ribosomes from messenger RNA at the termination of protein biosynthesis. May increase the efficiency of translation by recycling ribosomes from one round of translation to another.</text>
</comment>
<comment type="subcellular location">
    <subcellularLocation>
        <location evidence="1">Cytoplasm</location>
    </subcellularLocation>
</comment>
<comment type="similarity">
    <text evidence="1">Belongs to the RRF family.</text>
</comment>
<dbReference type="EMBL" id="CP001364">
    <property type="protein sequence ID" value="ACM55215.1"/>
    <property type="molecule type" value="Genomic_DNA"/>
</dbReference>
<dbReference type="SMR" id="B9LEM3"/>
<dbReference type="KEGG" id="chl:Chy400_3849"/>
<dbReference type="HOGENOM" id="CLU_073981_2_0_0"/>
<dbReference type="OrthoDB" id="9804006at2"/>
<dbReference type="GO" id="GO:0005737">
    <property type="term" value="C:cytoplasm"/>
    <property type="evidence" value="ECO:0007669"/>
    <property type="project" value="UniProtKB-SubCell"/>
</dbReference>
<dbReference type="GO" id="GO:0043023">
    <property type="term" value="F:ribosomal large subunit binding"/>
    <property type="evidence" value="ECO:0007669"/>
    <property type="project" value="TreeGrafter"/>
</dbReference>
<dbReference type="GO" id="GO:0006415">
    <property type="term" value="P:translational termination"/>
    <property type="evidence" value="ECO:0007669"/>
    <property type="project" value="UniProtKB-UniRule"/>
</dbReference>
<dbReference type="CDD" id="cd00520">
    <property type="entry name" value="RRF"/>
    <property type="match status" value="1"/>
</dbReference>
<dbReference type="FunFam" id="1.10.132.20:FF:000001">
    <property type="entry name" value="Ribosome-recycling factor"/>
    <property type="match status" value="1"/>
</dbReference>
<dbReference type="FunFam" id="3.30.1360.40:FF:000001">
    <property type="entry name" value="Ribosome-recycling factor"/>
    <property type="match status" value="1"/>
</dbReference>
<dbReference type="Gene3D" id="3.30.1360.40">
    <property type="match status" value="1"/>
</dbReference>
<dbReference type="Gene3D" id="1.10.132.20">
    <property type="entry name" value="Ribosome-recycling factor"/>
    <property type="match status" value="1"/>
</dbReference>
<dbReference type="HAMAP" id="MF_00040">
    <property type="entry name" value="RRF"/>
    <property type="match status" value="1"/>
</dbReference>
<dbReference type="InterPro" id="IPR002661">
    <property type="entry name" value="Ribosome_recyc_fac"/>
</dbReference>
<dbReference type="InterPro" id="IPR023584">
    <property type="entry name" value="Ribosome_recyc_fac_dom"/>
</dbReference>
<dbReference type="InterPro" id="IPR036191">
    <property type="entry name" value="RRF_sf"/>
</dbReference>
<dbReference type="NCBIfam" id="TIGR00496">
    <property type="entry name" value="frr"/>
    <property type="match status" value="1"/>
</dbReference>
<dbReference type="PANTHER" id="PTHR20982:SF3">
    <property type="entry name" value="MITOCHONDRIAL RIBOSOME RECYCLING FACTOR PSEUDO 1"/>
    <property type="match status" value="1"/>
</dbReference>
<dbReference type="PANTHER" id="PTHR20982">
    <property type="entry name" value="RIBOSOME RECYCLING FACTOR"/>
    <property type="match status" value="1"/>
</dbReference>
<dbReference type="Pfam" id="PF01765">
    <property type="entry name" value="RRF"/>
    <property type="match status" value="1"/>
</dbReference>
<dbReference type="SUPFAM" id="SSF55194">
    <property type="entry name" value="Ribosome recycling factor, RRF"/>
    <property type="match status" value="1"/>
</dbReference>